<sequence length="104" mass="11423">MQKIRKGDKVVVLSGKDKGCSGEVIKVSPKENKAFVRGINMVKRHQRQTQKQEAGIISKEAPVHLSNLAIADPKDGKPTRVGFRMNADGNKVRFAKRSGELING</sequence>
<organism>
    <name type="scientific">Bartonella tribocorum (strain CIP 105476 / IBS 506)</name>
    <dbReference type="NCBI Taxonomy" id="382640"/>
    <lineage>
        <taxon>Bacteria</taxon>
        <taxon>Pseudomonadati</taxon>
        <taxon>Pseudomonadota</taxon>
        <taxon>Alphaproteobacteria</taxon>
        <taxon>Hyphomicrobiales</taxon>
        <taxon>Bartonellaceae</taxon>
        <taxon>Bartonella</taxon>
    </lineage>
</organism>
<keyword id="KW-0687">Ribonucleoprotein</keyword>
<keyword id="KW-0689">Ribosomal protein</keyword>
<keyword id="KW-0694">RNA-binding</keyword>
<keyword id="KW-0699">rRNA-binding</keyword>
<proteinExistence type="inferred from homology"/>
<reference key="1">
    <citation type="journal article" date="2007" name="Nat. Genet.">
        <title>Genomic analysis of Bartonella identifies type IV secretion systems as host adaptability factors.</title>
        <authorList>
            <person name="Saenz H.L."/>
            <person name="Engel P."/>
            <person name="Stoeckli M.C."/>
            <person name="Lanz C."/>
            <person name="Raddatz G."/>
            <person name="Vayssier-Taussat M."/>
            <person name="Birtles R."/>
            <person name="Schuster S.C."/>
            <person name="Dehio C."/>
        </authorList>
    </citation>
    <scope>NUCLEOTIDE SEQUENCE [LARGE SCALE GENOMIC DNA]</scope>
    <source>
        <strain>CIP 105476 / IBS 506</strain>
    </source>
</reference>
<evidence type="ECO:0000255" key="1">
    <source>
        <dbReference type="HAMAP-Rule" id="MF_01326"/>
    </source>
</evidence>
<evidence type="ECO:0000305" key="2"/>
<name>RL24_BART1</name>
<comment type="function">
    <text evidence="1">One of two assembly initiator proteins, it binds directly to the 5'-end of the 23S rRNA, where it nucleates assembly of the 50S subunit.</text>
</comment>
<comment type="function">
    <text evidence="1">One of the proteins that surrounds the polypeptide exit tunnel on the outside of the subunit.</text>
</comment>
<comment type="subunit">
    <text evidence="1">Part of the 50S ribosomal subunit.</text>
</comment>
<comment type="similarity">
    <text evidence="1">Belongs to the universal ribosomal protein uL24 family.</text>
</comment>
<accession>A9IW12</accession>
<feature type="chain" id="PRO_1000086470" description="Large ribosomal subunit protein uL24">
    <location>
        <begin position="1"/>
        <end position="104"/>
    </location>
</feature>
<protein>
    <recommendedName>
        <fullName evidence="1">Large ribosomal subunit protein uL24</fullName>
    </recommendedName>
    <alternativeName>
        <fullName evidence="2">50S ribosomal protein L24</fullName>
    </alternativeName>
</protein>
<dbReference type="EMBL" id="AM260525">
    <property type="protein sequence ID" value="CAK01853.1"/>
    <property type="molecule type" value="Genomic_DNA"/>
</dbReference>
<dbReference type="RefSeq" id="WP_012231990.1">
    <property type="nucleotide sequence ID" value="NC_010161.1"/>
</dbReference>
<dbReference type="SMR" id="A9IW12"/>
<dbReference type="KEGG" id="btr:BT_1507"/>
<dbReference type="eggNOG" id="COG0198">
    <property type="taxonomic scope" value="Bacteria"/>
</dbReference>
<dbReference type="HOGENOM" id="CLU_093315_2_2_5"/>
<dbReference type="Proteomes" id="UP000001592">
    <property type="component" value="Chromosome"/>
</dbReference>
<dbReference type="GO" id="GO:1990904">
    <property type="term" value="C:ribonucleoprotein complex"/>
    <property type="evidence" value="ECO:0007669"/>
    <property type="project" value="UniProtKB-KW"/>
</dbReference>
<dbReference type="GO" id="GO:0005840">
    <property type="term" value="C:ribosome"/>
    <property type="evidence" value="ECO:0007669"/>
    <property type="project" value="UniProtKB-KW"/>
</dbReference>
<dbReference type="GO" id="GO:0019843">
    <property type="term" value="F:rRNA binding"/>
    <property type="evidence" value="ECO:0007669"/>
    <property type="project" value="UniProtKB-UniRule"/>
</dbReference>
<dbReference type="GO" id="GO:0003735">
    <property type="term" value="F:structural constituent of ribosome"/>
    <property type="evidence" value="ECO:0007669"/>
    <property type="project" value="InterPro"/>
</dbReference>
<dbReference type="GO" id="GO:0006412">
    <property type="term" value="P:translation"/>
    <property type="evidence" value="ECO:0007669"/>
    <property type="project" value="UniProtKB-UniRule"/>
</dbReference>
<dbReference type="CDD" id="cd06089">
    <property type="entry name" value="KOW_RPL26"/>
    <property type="match status" value="1"/>
</dbReference>
<dbReference type="FunFam" id="2.30.30.30:FF:000004">
    <property type="entry name" value="50S ribosomal protein L24"/>
    <property type="match status" value="1"/>
</dbReference>
<dbReference type="Gene3D" id="2.30.30.30">
    <property type="match status" value="1"/>
</dbReference>
<dbReference type="HAMAP" id="MF_01326_B">
    <property type="entry name" value="Ribosomal_uL24_B"/>
    <property type="match status" value="1"/>
</dbReference>
<dbReference type="InterPro" id="IPR005824">
    <property type="entry name" value="KOW"/>
</dbReference>
<dbReference type="InterPro" id="IPR014722">
    <property type="entry name" value="Rib_uL2_dom2"/>
</dbReference>
<dbReference type="InterPro" id="IPR003256">
    <property type="entry name" value="Ribosomal_uL24"/>
</dbReference>
<dbReference type="InterPro" id="IPR005825">
    <property type="entry name" value="Ribosomal_uL24_CS"/>
</dbReference>
<dbReference type="InterPro" id="IPR041988">
    <property type="entry name" value="Ribosomal_uL24_KOW"/>
</dbReference>
<dbReference type="InterPro" id="IPR008991">
    <property type="entry name" value="Translation_prot_SH3-like_sf"/>
</dbReference>
<dbReference type="NCBIfam" id="TIGR01079">
    <property type="entry name" value="rplX_bact"/>
    <property type="match status" value="1"/>
</dbReference>
<dbReference type="PANTHER" id="PTHR12903">
    <property type="entry name" value="MITOCHONDRIAL RIBOSOMAL PROTEIN L24"/>
    <property type="match status" value="1"/>
</dbReference>
<dbReference type="Pfam" id="PF00467">
    <property type="entry name" value="KOW"/>
    <property type="match status" value="1"/>
</dbReference>
<dbReference type="Pfam" id="PF17136">
    <property type="entry name" value="ribosomal_L24"/>
    <property type="match status" value="1"/>
</dbReference>
<dbReference type="SMART" id="SM00739">
    <property type="entry name" value="KOW"/>
    <property type="match status" value="1"/>
</dbReference>
<dbReference type="SUPFAM" id="SSF50104">
    <property type="entry name" value="Translation proteins SH3-like domain"/>
    <property type="match status" value="1"/>
</dbReference>
<dbReference type="PROSITE" id="PS01108">
    <property type="entry name" value="RIBOSOMAL_L24"/>
    <property type="match status" value="1"/>
</dbReference>
<gene>
    <name evidence="1" type="primary">rplX</name>
    <name type="ordered locus">BT_1507</name>
</gene>